<comment type="function">
    <text evidence="1">Tetrapolymerization of the monopyrrole PBG into the hydroxymethylbilane pre-uroporphyrinogen in several discrete steps.</text>
</comment>
<comment type="catalytic activity">
    <reaction evidence="1">
        <text>4 porphobilinogen + H2O = hydroxymethylbilane + 4 NH4(+)</text>
        <dbReference type="Rhea" id="RHEA:13185"/>
        <dbReference type="ChEBI" id="CHEBI:15377"/>
        <dbReference type="ChEBI" id="CHEBI:28938"/>
        <dbReference type="ChEBI" id="CHEBI:57845"/>
        <dbReference type="ChEBI" id="CHEBI:58126"/>
        <dbReference type="EC" id="2.5.1.61"/>
    </reaction>
</comment>
<comment type="cofactor">
    <cofactor evidence="1">
        <name>dipyrromethane</name>
        <dbReference type="ChEBI" id="CHEBI:60342"/>
    </cofactor>
    <text evidence="1">Binds 1 dipyrromethane group covalently.</text>
</comment>
<comment type="pathway">
    <text evidence="1">Porphyrin-containing compound metabolism; protoporphyrin-IX biosynthesis; coproporphyrinogen-III from 5-aminolevulinate: step 2/4.</text>
</comment>
<comment type="pathway">
    <text evidence="1">Porphyrin-containing compound metabolism; chlorophyll biosynthesis.</text>
</comment>
<comment type="subunit">
    <text evidence="1">Monomer.</text>
</comment>
<comment type="miscellaneous">
    <text evidence="1">The porphobilinogen subunits are added to the dipyrromethane group.</text>
</comment>
<comment type="similarity">
    <text evidence="1">Belongs to the HMBS family.</text>
</comment>
<accession>A5GSE0</accession>
<proteinExistence type="inferred from homology"/>
<keyword id="KW-0149">Chlorophyll biosynthesis</keyword>
<keyword id="KW-0627">Porphyrin biosynthesis</keyword>
<keyword id="KW-1185">Reference proteome</keyword>
<keyword id="KW-0808">Transferase</keyword>
<gene>
    <name evidence="1" type="primary">hemC</name>
    <name type="ordered locus">SynRCC307_0896</name>
</gene>
<reference key="1">
    <citation type="submission" date="2006-05" db="EMBL/GenBank/DDBJ databases">
        <authorList>
            <consortium name="Genoscope"/>
        </authorList>
    </citation>
    <scope>NUCLEOTIDE SEQUENCE [LARGE SCALE GENOMIC DNA]</scope>
    <source>
        <strain>RCC307</strain>
    </source>
</reference>
<sequence>MTASSLRIASRRSQLAMVQTEWVRDELANAHPGLEISIEAMATQGDKILDVALAKIGDKGLFTKELEAQMLVNRADIAVHSLKDLPTNLPEGLMLGCITEREDPADALVMHAKNKDLTLATLPEGAVVGTSSLRRLAQLRYHYPHLTFKDVRGNVITRLEKLDSGQFDCLILAAAGLGRLGLGDRIHELIDPSISLHAVGQGALGIECRDGDAAVLEQIKVLEHRPTSLRCLAERAFLRTLEGGCQVPIGVNTRFEGDELVLTGMVASLDGKQLIRDELRAPQDQAEDLGNRLAELLRSQGAGEILAKIFAEARPEA</sequence>
<protein>
    <recommendedName>
        <fullName evidence="1">Porphobilinogen deaminase</fullName>
        <shortName evidence="1">PBG</shortName>
        <ecNumber evidence="1">2.5.1.61</ecNumber>
    </recommendedName>
    <alternativeName>
        <fullName evidence="1">Hydroxymethylbilane synthase</fullName>
        <shortName evidence="1">HMBS</shortName>
    </alternativeName>
    <alternativeName>
        <fullName evidence="1">Pre-uroporphyrinogen synthase</fullName>
    </alternativeName>
</protein>
<dbReference type="EC" id="2.5.1.61" evidence="1"/>
<dbReference type="EMBL" id="CT978603">
    <property type="protein sequence ID" value="CAK27799.1"/>
    <property type="molecule type" value="Genomic_DNA"/>
</dbReference>
<dbReference type="SMR" id="A5GSE0"/>
<dbReference type="STRING" id="316278.SynRCC307_0896"/>
<dbReference type="KEGG" id="syr:SynRCC307_0896"/>
<dbReference type="eggNOG" id="COG0181">
    <property type="taxonomic scope" value="Bacteria"/>
</dbReference>
<dbReference type="HOGENOM" id="CLU_019704_0_1_3"/>
<dbReference type="OrthoDB" id="9810298at2"/>
<dbReference type="UniPathway" id="UPA00251">
    <property type="reaction ID" value="UER00319"/>
</dbReference>
<dbReference type="UniPathway" id="UPA00668"/>
<dbReference type="Proteomes" id="UP000001115">
    <property type="component" value="Chromosome"/>
</dbReference>
<dbReference type="GO" id="GO:0005737">
    <property type="term" value="C:cytoplasm"/>
    <property type="evidence" value="ECO:0007669"/>
    <property type="project" value="TreeGrafter"/>
</dbReference>
<dbReference type="GO" id="GO:0004418">
    <property type="term" value="F:hydroxymethylbilane synthase activity"/>
    <property type="evidence" value="ECO:0007669"/>
    <property type="project" value="UniProtKB-UniRule"/>
</dbReference>
<dbReference type="GO" id="GO:0015995">
    <property type="term" value="P:chlorophyll biosynthetic process"/>
    <property type="evidence" value="ECO:0007669"/>
    <property type="project" value="UniProtKB-UniRule"/>
</dbReference>
<dbReference type="GO" id="GO:0006782">
    <property type="term" value="P:protoporphyrinogen IX biosynthetic process"/>
    <property type="evidence" value="ECO:0007669"/>
    <property type="project" value="UniProtKB-UniRule"/>
</dbReference>
<dbReference type="CDD" id="cd13645">
    <property type="entry name" value="PBP2_HuPBGD_like"/>
    <property type="match status" value="1"/>
</dbReference>
<dbReference type="FunFam" id="3.30.160.40:FF:000002">
    <property type="entry name" value="Porphobilinogen deaminase"/>
    <property type="match status" value="1"/>
</dbReference>
<dbReference type="FunFam" id="3.40.190.10:FF:000004">
    <property type="entry name" value="Porphobilinogen deaminase"/>
    <property type="match status" value="1"/>
</dbReference>
<dbReference type="FunFam" id="3.40.190.10:FF:000005">
    <property type="entry name" value="Porphobilinogen deaminase"/>
    <property type="match status" value="1"/>
</dbReference>
<dbReference type="Gene3D" id="3.40.190.10">
    <property type="entry name" value="Periplasmic binding protein-like II"/>
    <property type="match status" value="2"/>
</dbReference>
<dbReference type="Gene3D" id="3.30.160.40">
    <property type="entry name" value="Porphobilinogen deaminase, C-terminal domain"/>
    <property type="match status" value="1"/>
</dbReference>
<dbReference type="HAMAP" id="MF_00260">
    <property type="entry name" value="Porphobil_deam"/>
    <property type="match status" value="1"/>
</dbReference>
<dbReference type="InterPro" id="IPR000860">
    <property type="entry name" value="HemC"/>
</dbReference>
<dbReference type="InterPro" id="IPR022419">
    <property type="entry name" value="Porphobilin_deaminase_cofac_BS"/>
</dbReference>
<dbReference type="InterPro" id="IPR022417">
    <property type="entry name" value="Porphobilin_deaminase_N"/>
</dbReference>
<dbReference type="InterPro" id="IPR022418">
    <property type="entry name" value="Porphobilinogen_deaminase_C"/>
</dbReference>
<dbReference type="InterPro" id="IPR036803">
    <property type="entry name" value="Porphobilinogen_deaminase_C_sf"/>
</dbReference>
<dbReference type="NCBIfam" id="TIGR00212">
    <property type="entry name" value="hemC"/>
    <property type="match status" value="1"/>
</dbReference>
<dbReference type="PANTHER" id="PTHR11557">
    <property type="entry name" value="PORPHOBILINOGEN DEAMINASE"/>
    <property type="match status" value="1"/>
</dbReference>
<dbReference type="PANTHER" id="PTHR11557:SF0">
    <property type="entry name" value="PORPHOBILINOGEN DEAMINASE"/>
    <property type="match status" value="1"/>
</dbReference>
<dbReference type="Pfam" id="PF01379">
    <property type="entry name" value="Porphobil_deam"/>
    <property type="match status" value="1"/>
</dbReference>
<dbReference type="Pfam" id="PF03900">
    <property type="entry name" value="Porphobil_deamC"/>
    <property type="match status" value="1"/>
</dbReference>
<dbReference type="PIRSF" id="PIRSF001438">
    <property type="entry name" value="4pyrrol_synth_OHMeBilane_synth"/>
    <property type="match status" value="1"/>
</dbReference>
<dbReference type="PRINTS" id="PR00151">
    <property type="entry name" value="PORPHBDMNASE"/>
</dbReference>
<dbReference type="SUPFAM" id="SSF53850">
    <property type="entry name" value="Periplasmic binding protein-like II"/>
    <property type="match status" value="1"/>
</dbReference>
<dbReference type="SUPFAM" id="SSF54782">
    <property type="entry name" value="Porphobilinogen deaminase (hydroxymethylbilane synthase), C-terminal domain"/>
    <property type="match status" value="1"/>
</dbReference>
<dbReference type="PROSITE" id="PS00533">
    <property type="entry name" value="PORPHOBILINOGEN_DEAM"/>
    <property type="match status" value="1"/>
</dbReference>
<feature type="chain" id="PRO_0000304284" description="Porphobilinogen deaminase">
    <location>
        <begin position="1"/>
        <end position="317"/>
    </location>
</feature>
<feature type="modified residue" description="S-(dipyrrolylmethanemethyl)cysteine" evidence="1">
    <location>
        <position position="245"/>
    </location>
</feature>
<organism>
    <name type="scientific">Synechococcus sp. (strain RCC307)</name>
    <dbReference type="NCBI Taxonomy" id="316278"/>
    <lineage>
        <taxon>Bacteria</taxon>
        <taxon>Bacillati</taxon>
        <taxon>Cyanobacteriota</taxon>
        <taxon>Cyanophyceae</taxon>
        <taxon>Synechococcales</taxon>
        <taxon>Synechococcaceae</taxon>
        <taxon>Synechococcus</taxon>
    </lineage>
</organism>
<evidence type="ECO:0000255" key="1">
    <source>
        <dbReference type="HAMAP-Rule" id="MF_00260"/>
    </source>
</evidence>
<name>HEM3_SYNR3</name>